<keyword id="KW-0131">Cell cycle</keyword>
<keyword id="KW-0132">Cell division</keyword>
<keyword id="KW-0159">Chromosome partition</keyword>
<keyword id="KW-0963">Cytoplasm</keyword>
<keyword id="KW-0229">DNA integration</keyword>
<keyword id="KW-0233">DNA recombination</keyword>
<keyword id="KW-0238">DNA-binding</keyword>
<proteinExistence type="inferred from homology"/>
<organism>
    <name type="scientific">Staphylococcus aureus (strain bovine RF122 / ET3-1)</name>
    <dbReference type="NCBI Taxonomy" id="273036"/>
    <lineage>
        <taxon>Bacteria</taxon>
        <taxon>Bacillati</taxon>
        <taxon>Bacillota</taxon>
        <taxon>Bacilli</taxon>
        <taxon>Bacillales</taxon>
        <taxon>Staphylococcaceae</taxon>
        <taxon>Staphylococcus</taxon>
    </lineage>
</organism>
<feature type="chain" id="PRO_1000070046" description="Tyrosine recombinase XerC">
    <location>
        <begin position="1"/>
        <end position="298"/>
    </location>
</feature>
<feature type="domain" description="Core-binding (CB)" evidence="3">
    <location>
        <begin position="1"/>
        <end position="84"/>
    </location>
</feature>
<feature type="domain" description="Tyr recombinase" evidence="2">
    <location>
        <begin position="105"/>
        <end position="286"/>
    </location>
</feature>
<feature type="active site" evidence="1">
    <location>
        <position position="145"/>
    </location>
</feature>
<feature type="active site" evidence="1">
    <location>
        <position position="169"/>
    </location>
</feature>
<feature type="active site" evidence="1">
    <location>
        <position position="238"/>
    </location>
</feature>
<feature type="active site" evidence="1">
    <location>
        <position position="241"/>
    </location>
</feature>
<feature type="active site" evidence="1">
    <location>
        <position position="264"/>
    </location>
</feature>
<feature type="active site" description="O-(3'-phospho-DNA)-tyrosine intermediate" evidence="1">
    <location>
        <position position="273"/>
    </location>
</feature>
<evidence type="ECO:0000255" key="1">
    <source>
        <dbReference type="HAMAP-Rule" id="MF_01808"/>
    </source>
</evidence>
<evidence type="ECO:0000255" key="2">
    <source>
        <dbReference type="PROSITE-ProRule" id="PRU01246"/>
    </source>
</evidence>
<evidence type="ECO:0000255" key="3">
    <source>
        <dbReference type="PROSITE-ProRule" id="PRU01248"/>
    </source>
</evidence>
<accession>Q2YXL6</accession>
<protein>
    <recommendedName>
        <fullName evidence="1">Tyrosine recombinase XerC</fullName>
    </recommendedName>
</protein>
<reference key="1">
    <citation type="journal article" date="2007" name="PLoS ONE">
        <title>Molecular correlates of host specialization in Staphylococcus aureus.</title>
        <authorList>
            <person name="Herron-Olson L."/>
            <person name="Fitzgerald J.R."/>
            <person name="Musser J.M."/>
            <person name="Kapur V."/>
        </authorList>
    </citation>
    <scope>NUCLEOTIDE SEQUENCE [LARGE SCALE GENOMIC DNA]</scope>
    <source>
        <strain>bovine RF122 / ET3-1</strain>
    </source>
</reference>
<gene>
    <name evidence="1" type="primary">xerC</name>
    <name type="ordered locus">SAB1114</name>
</gene>
<name>XERC_STAAB</name>
<comment type="function">
    <text evidence="1">Site-specific tyrosine recombinase, which acts by catalyzing the cutting and rejoining of the recombining DNA molecules. The XerC-XerD complex is essential to convert dimers of the bacterial chromosome into monomers to permit their segregation at cell division. It also contributes to the segregational stability of plasmids.</text>
</comment>
<comment type="subunit">
    <text evidence="1">Forms a cyclic heterotetrameric complex composed of two molecules of XerC and two molecules of XerD.</text>
</comment>
<comment type="subcellular location">
    <subcellularLocation>
        <location evidence="1">Cytoplasm</location>
    </subcellularLocation>
</comment>
<comment type="similarity">
    <text evidence="1">Belongs to the 'phage' integrase family. XerC subfamily.</text>
</comment>
<dbReference type="EMBL" id="AJ938182">
    <property type="protein sequence ID" value="CAI80803.1"/>
    <property type="molecule type" value="Genomic_DNA"/>
</dbReference>
<dbReference type="RefSeq" id="WP_001015607.1">
    <property type="nucleotide sequence ID" value="NC_007622.1"/>
</dbReference>
<dbReference type="SMR" id="Q2YXL6"/>
<dbReference type="KEGG" id="sab:SAB1114"/>
<dbReference type="HOGENOM" id="CLU_027562_9_0_9"/>
<dbReference type="GO" id="GO:0005737">
    <property type="term" value="C:cytoplasm"/>
    <property type="evidence" value="ECO:0007669"/>
    <property type="project" value="UniProtKB-SubCell"/>
</dbReference>
<dbReference type="GO" id="GO:0003677">
    <property type="term" value="F:DNA binding"/>
    <property type="evidence" value="ECO:0007669"/>
    <property type="project" value="UniProtKB-KW"/>
</dbReference>
<dbReference type="GO" id="GO:0009037">
    <property type="term" value="F:tyrosine-based site-specific recombinase activity"/>
    <property type="evidence" value="ECO:0007669"/>
    <property type="project" value="UniProtKB-UniRule"/>
</dbReference>
<dbReference type="GO" id="GO:0051301">
    <property type="term" value="P:cell division"/>
    <property type="evidence" value="ECO:0007669"/>
    <property type="project" value="UniProtKB-KW"/>
</dbReference>
<dbReference type="GO" id="GO:0007059">
    <property type="term" value="P:chromosome segregation"/>
    <property type="evidence" value="ECO:0007669"/>
    <property type="project" value="UniProtKB-UniRule"/>
</dbReference>
<dbReference type="GO" id="GO:0006313">
    <property type="term" value="P:DNA transposition"/>
    <property type="evidence" value="ECO:0007669"/>
    <property type="project" value="UniProtKB-UniRule"/>
</dbReference>
<dbReference type="CDD" id="cd00798">
    <property type="entry name" value="INT_XerDC_C"/>
    <property type="match status" value="1"/>
</dbReference>
<dbReference type="Gene3D" id="1.10.150.130">
    <property type="match status" value="1"/>
</dbReference>
<dbReference type="Gene3D" id="1.10.443.10">
    <property type="entry name" value="Intergrase catalytic core"/>
    <property type="match status" value="1"/>
</dbReference>
<dbReference type="HAMAP" id="MF_01808">
    <property type="entry name" value="Recomb_XerC_XerD"/>
    <property type="match status" value="1"/>
</dbReference>
<dbReference type="InterPro" id="IPR044068">
    <property type="entry name" value="CB"/>
</dbReference>
<dbReference type="InterPro" id="IPR011010">
    <property type="entry name" value="DNA_brk_join_enz"/>
</dbReference>
<dbReference type="InterPro" id="IPR013762">
    <property type="entry name" value="Integrase-like_cat_sf"/>
</dbReference>
<dbReference type="InterPro" id="IPR002104">
    <property type="entry name" value="Integrase_catalytic"/>
</dbReference>
<dbReference type="InterPro" id="IPR010998">
    <property type="entry name" value="Integrase_recombinase_N"/>
</dbReference>
<dbReference type="InterPro" id="IPR004107">
    <property type="entry name" value="Integrase_SAM-like_N"/>
</dbReference>
<dbReference type="InterPro" id="IPR011931">
    <property type="entry name" value="Recomb_XerC"/>
</dbReference>
<dbReference type="InterPro" id="IPR023009">
    <property type="entry name" value="Tyrosine_recombinase_XerC/XerD"/>
</dbReference>
<dbReference type="InterPro" id="IPR050090">
    <property type="entry name" value="Tyrosine_recombinase_XerCD"/>
</dbReference>
<dbReference type="NCBIfam" id="NF001399">
    <property type="entry name" value="PRK00283.1"/>
    <property type="match status" value="1"/>
</dbReference>
<dbReference type="NCBIfam" id="NF040815">
    <property type="entry name" value="recomb_XerA_Arch"/>
    <property type="match status" value="1"/>
</dbReference>
<dbReference type="NCBIfam" id="TIGR02224">
    <property type="entry name" value="recomb_XerC"/>
    <property type="match status" value="1"/>
</dbReference>
<dbReference type="PANTHER" id="PTHR30349">
    <property type="entry name" value="PHAGE INTEGRASE-RELATED"/>
    <property type="match status" value="1"/>
</dbReference>
<dbReference type="PANTHER" id="PTHR30349:SF77">
    <property type="entry name" value="TYROSINE RECOMBINASE XERC"/>
    <property type="match status" value="1"/>
</dbReference>
<dbReference type="Pfam" id="PF02899">
    <property type="entry name" value="Phage_int_SAM_1"/>
    <property type="match status" value="1"/>
</dbReference>
<dbReference type="Pfam" id="PF00589">
    <property type="entry name" value="Phage_integrase"/>
    <property type="match status" value="1"/>
</dbReference>
<dbReference type="SUPFAM" id="SSF56349">
    <property type="entry name" value="DNA breaking-rejoining enzymes"/>
    <property type="match status" value="1"/>
</dbReference>
<dbReference type="PROSITE" id="PS51900">
    <property type="entry name" value="CB"/>
    <property type="match status" value="1"/>
</dbReference>
<dbReference type="PROSITE" id="PS51898">
    <property type="entry name" value="TYR_RECOMBINASE"/>
    <property type="match status" value="1"/>
</dbReference>
<sequence length="298" mass="35133">MNHIQEAFLNTLKVERNFSEHTLKSYQDDLIQFNQFLEQEHLQLNTFEYRDARNYLSYLYSNHLKRTSVSRKISTLRTFYEYWMTLDENIINPFVQLVHPKKEKYLPQFFYEEEMEALFKTVEEDTSKSLRDRVILELLYATGIRVSELVNIKKQDIDFYANGVTVFGKGSKERFVPFGAYCRQSIENYLEHFKPIQSCNHDFLIVNMKGEAITERGVRYVLNDIVKRTAGVSEIHPHKLRHTFATHLLNQGADLRTVQSLLGHVNLSTTGKYTHVSNQQLRKVYLNAHPRAKKENET</sequence>